<reference key="1">
    <citation type="journal article" date="2002" name="Nucleic Acids Res.">
        <title>Genome sequence of Shigella flexneri 2a: insights into pathogenicity through comparison with genomes of Escherichia coli K12 and O157.</title>
        <authorList>
            <person name="Jin Q."/>
            <person name="Yuan Z."/>
            <person name="Xu J."/>
            <person name="Wang Y."/>
            <person name="Shen Y."/>
            <person name="Lu W."/>
            <person name="Wang J."/>
            <person name="Liu H."/>
            <person name="Yang J."/>
            <person name="Yang F."/>
            <person name="Zhang X."/>
            <person name="Zhang J."/>
            <person name="Yang G."/>
            <person name="Wu H."/>
            <person name="Qu D."/>
            <person name="Dong J."/>
            <person name="Sun L."/>
            <person name="Xue Y."/>
            <person name="Zhao A."/>
            <person name="Gao Y."/>
            <person name="Zhu J."/>
            <person name="Kan B."/>
            <person name="Ding K."/>
            <person name="Chen S."/>
            <person name="Cheng H."/>
            <person name="Yao Z."/>
            <person name="He B."/>
            <person name="Chen R."/>
            <person name="Ma D."/>
            <person name="Qiang B."/>
            <person name="Wen Y."/>
            <person name="Hou Y."/>
            <person name="Yu J."/>
        </authorList>
    </citation>
    <scope>NUCLEOTIDE SEQUENCE [LARGE SCALE GENOMIC DNA]</scope>
    <source>
        <strain>301 / Serotype 2a</strain>
    </source>
</reference>
<reference key="2">
    <citation type="journal article" date="2003" name="Infect. Immun.">
        <title>Complete genome sequence and comparative genomics of Shigella flexneri serotype 2a strain 2457T.</title>
        <authorList>
            <person name="Wei J."/>
            <person name="Goldberg M.B."/>
            <person name="Burland V."/>
            <person name="Venkatesan M.M."/>
            <person name="Deng W."/>
            <person name="Fournier G."/>
            <person name="Mayhew G.F."/>
            <person name="Plunkett G. III"/>
            <person name="Rose D.J."/>
            <person name="Darling A."/>
            <person name="Mau B."/>
            <person name="Perna N.T."/>
            <person name="Payne S.M."/>
            <person name="Runyen-Janecky L.J."/>
            <person name="Zhou S."/>
            <person name="Schwartz D.C."/>
            <person name="Blattner F.R."/>
        </authorList>
    </citation>
    <scope>NUCLEOTIDE SEQUENCE [LARGE SCALE GENOMIC DNA]</scope>
    <source>
        <strain>ATCC 700930 / 2457T / Serotype 2a</strain>
    </source>
</reference>
<feature type="chain" id="PRO_0000114066" description="Glutamyl-tRNA reductase">
    <location>
        <begin position="1"/>
        <end position="418"/>
    </location>
</feature>
<feature type="active site" description="Nucleophile" evidence="1">
    <location>
        <position position="50"/>
    </location>
</feature>
<feature type="binding site" evidence="1">
    <location>
        <begin position="49"/>
        <end position="52"/>
    </location>
    <ligand>
        <name>substrate</name>
    </ligand>
</feature>
<feature type="binding site" evidence="1">
    <location>
        <position position="109"/>
    </location>
    <ligand>
        <name>substrate</name>
    </ligand>
</feature>
<feature type="binding site" evidence="1">
    <location>
        <begin position="114"/>
        <end position="116"/>
    </location>
    <ligand>
        <name>substrate</name>
    </ligand>
</feature>
<feature type="binding site" evidence="1">
    <location>
        <position position="120"/>
    </location>
    <ligand>
        <name>substrate</name>
    </ligand>
</feature>
<feature type="binding site" evidence="1">
    <location>
        <begin position="189"/>
        <end position="194"/>
    </location>
    <ligand>
        <name>NADP(+)</name>
        <dbReference type="ChEBI" id="CHEBI:58349"/>
    </ligand>
</feature>
<feature type="site" description="Important for activity" evidence="1">
    <location>
        <position position="99"/>
    </location>
</feature>
<organism>
    <name type="scientific">Shigella flexneri</name>
    <dbReference type="NCBI Taxonomy" id="623"/>
    <lineage>
        <taxon>Bacteria</taxon>
        <taxon>Pseudomonadati</taxon>
        <taxon>Pseudomonadota</taxon>
        <taxon>Gammaproteobacteria</taxon>
        <taxon>Enterobacterales</taxon>
        <taxon>Enterobacteriaceae</taxon>
        <taxon>Shigella</taxon>
    </lineage>
</organism>
<dbReference type="EC" id="1.2.1.70" evidence="1"/>
<dbReference type="EMBL" id="AE005674">
    <property type="protein sequence ID" value="AAN42826.2"/>
    <property type="molecule type" value="Genomic_DNA"/>
</dbReference>
<dbReference type="EMBL" id="AE014073">
    <property type="protein sequence ID" value="AAP16712.1"/>
    <property type="molecule type" value="Genomic_DNA"/>
</dbReference>
<dbReference type="RefSeq" id="NP_707119.2">
    <property type="nucleotide sequence ID" value="NC_004337.2"/>
</dbReference>
<dbReference type="RefSeq" id="WP_005049668.1">
    <property type="nucleotide sequence ID" value="NZ_WPGW01000029.1"/>
</dbReference>
<dbReference type="SMR" id="Q83RP1"/>
<dbReference type="STRING" id="198214.SF1213"/>
<dbReference type="PaxDb" id="198214-SF1213"/>
<dbReference type="GeneID" id="1024143"/>
<dbReference type="KEGG" id="sfl:SF1213"/>
<dbReference type="KEGG" id="sfx:S1297"/>
<dbReference type="PATRIC" id="fig|198214.7.peg.1430"/>
<dbReference type="HOGENOM" id="CLU_035113_2_2_6"/>
<dbReference type="UniPathway" id="UPA00251">
    <property type="reaction ID" value="UER00316"/>
</dbReference>
<dbReference type="Proteomes" id="UP000001006">
    <property type="component" value="Chromosome"/>
</dbReference>
<dbReference type="Proteomes" id="UP000002673">
    <property type="component" value="Chromosome"/>
</dbReference>
<dbReference type="GO" id="GO:0008883">
    <property type="term" value="F:glutamyl-tRNA reductase activity"/>
    <property type="evidence" value="ECO:0007669"/>
    <property type="project" value="UniProtKB-UniRule"/>
</dbReference>
<dbReference type="GO" id="GO:0050661">
    <property type="term" value="F:NADP binding"/>
    <property type="evidence" value="ECO:0007669"/>
    <property type="project" value="InterPro"/>
</dbReference>
<dbReference type="GO" id="GO:0019353">
    <property type="term" value="P:protoporphyrinogen IX biosynthetic process from glutamate"/>
    <property type="evidence" value="ECO:0007669"/>
    <property type="project" value="TreeGrafter"/>
</dbReference>
<dbReference type="CDD" id="cd05213">
    <property type="entry name" value="NAD_bind_Glutamyl_tRNA_reduct"/>
    <property type="match status" value="1"/>
</dbReference>
<dbReference type="FunFam" id="3.30.460.30:FF:000001">
    <property type="entry name" value="Glutamyl-tRNA reductase"/>
    <property type="match status" value="1"/>
</dbReference>
<dbReference type="FunFam" id="3.40.50.720:FF:000031">
    <property type="entry name" value="Glutamyl-tRNA reductase"/>
    <property type="match status" value="1"/>
</dbReference>
<dbReference type="Gene3D" id="3.30.460.30">
    <property type="entry name" value="Glutamyl-tRNA reductase, N-terminal domain"/>
    <property type="match status" value="1"/>
</dbReference>
<dbReference type="Gene3D" id="3.40.50.720">
    <property type="entry name" value="NAD(P)-binding Rossmann-like Domain"/>
    <property type="match status" value="1"/>
</dbReference>
<dbReference type="HAMAP" id="MF_00087">
    <property type="entry name" value="Glu_tRNA_reductase"/>
    <property type="match status" value="1"/>
</dbReference>
<dbReference type="InterPro" id="IPR000343">
    <property type="entry name" value="4pyrrol_synth_GluRdtase"/>
</dbReference>
<dbReference type="InterPro" id="IPR015896">
    <property type="entry name" value="4pyrrol_synth_GluRdtase_dimer"/>
</dbReference>
<dbReference type="InterPro" id="IPR015895">
    <property type="entry name" value="4pyrrol_synth_GluRdtase_N"/>
</dbReference>
<dbReference type="InterPro" id="IPR018214">
    <property type="entry name" value="GluRdtase_CS"/>
</dbReference>
<dbReference type="InterPro" id="IPR036453">
    <property type="entry name" value="GluRdtase_dimer_dom_sf"/>
</dbReference>
<dbReference type="InterPro" id="IPR036343">
    <property type="entry name" value="GluRdtase_N_sf"/>
</dbReference>
<dbReference type="InterPro" id="IPR036291">
    <property type="entry name" value="NAD(P)-bd_dom_sf"/>
</dbReference>
<dbReference type="InterPro" id="IPR006151">
    <property type="entry name" value="Shikm_DH/Glu-tRNA_Rdtase"/>
</dbReference>
<dbReference type="NCBIfam" id="TIGR01035">
    <property type="entry name" value="hemA"/>
    <property type="match status" value="1"/>
</dbReference>
<dbReference type="PANTHER" id="PTHR43013">
    <property type="entry name" value="GLUTAMYL-TRNA REDUCTASE"/>
    <property type="match status" value="1"/>
</dbReference>
<dbReference type="PANTHER" id="PTHR43013:SF1">
    <property type="entry name" value="GLUTAMYL-TRNA REDUCTASE"/>
    <property type="match status" value="1"/>
</dbReference>
<dbReference type="Pfam" id="PF00745">
    <property type="entry name" value="GlutR_dimer"/>
    <property type="match status" value="1"/>
</dbReference>
<dbReference type="Pfam" id="PF05201">
    <property type="entry name" value="GlutR_N"/>
    <property type="match status" value="1"/>
</dbReference>
<dbReference type="Pfam" id="PF01488">
    <property type="entry name" value="Shikimate_DH"/>
    <property type="match status" value="1"/>
</dbReference>
<dbReference type="PIRSF" id="PIRSF000445">
    <property type="entry name" value="4pyrrol_synth_GluRdtase"/>
    <property type="match status" value="1"/>
</dbReference>
<dbReference type="SUPFAM" id="SSF69742">
    <property type="entry name" value="Glutamyl tRNA-reductase catalytic, N-terminal domain"/>
    <property type="match status" value="1"/>
</dbReference>
<dbReference type="SUPFAM" id="SSF69075">
    <property type="entry name" value="Glutamyl tRNA-reductase dimerization domain"/>
    <property type="match status" value="1"/>
</dbReference>
<dbReference type="SUPFAM" id="SSF51735">
    <property type="entry name" value="NAD(P)-binding Rossmann-fold domains"/>
    <property type="match status" value="1"/>
</dbReference>
<dbReference type="PROSITE" id="PS00747">
    <property type="entry name" value="GLUTR"/>
    <property type="match status" value="1"/>
</dbReference>
<keyword id="KW-0521">NADP</keyword>
<keyword id="KW-0560">Oxidoreductase</keyword>
<keyword id="KW-0627">Porphyrin biosynthesis</keyword>
<keyword id="KW-1185">Reference proteome</keyword>
<accession>Q83RP1</accession>
<accession>Q7UCS4</accession>
<name>HEM1_SHIFL</name>
<gene>
    <name evidence="1" type="primary">hemA</name>
    <name type="ordered locus">SF1213</name>
    <name type="ordered locus">S1297</name>
</gene>
<evidence type="ECO:0000255" key="1">
    <source>
        <dbReference type="HAMAP-Rule" id="MF_00087"/>
    </source>
</evidence>
<proteinExistence type="inferred from homology"/>
<comment type="function">
    <text evidence="1">Catalyzes the NADPH-dependent reduction of glutamyl-tRNA(Glu) to glutamate 1-semialdehyde (GSA).</text>
</comment>
<comment type="catalytic activity">
    <reaction evidence="1">
        <text>(S)-4-amino-5-oxopentanoate + tRNA(Glu) + NADP(+) = L-glutamyl-tRNA(Glu) + NADPH + H(+)</text>
        <dbReference type="Rhea" id="RHEA:12344"/>
        <dbReference type="Rhea" id="RHEA-COMP:9663"/>
        <dbReference type="Rhea" id="RHEA-COMP:9680"/>
        <dbReference type="ChEBI" id="CHEBI:15378"/>
        <dbReference type="ChEBI" id="CHEBI:57501"/>
        <dbReference type="ChEBI" id="CHEBI:57783"/>
        <dbReference type="ChEBI" id="CHEBI:58349"/>
        <dbReference type="ChEBI" id="CHEBI:78442"/>
        <dbReference type="ChEBI" id="CHEBI:78520"/>
        <dbReference type="EC" id="1.2.1.70"/>
    </reaction>
</comment>
<comment type="pathway">
    <text evidence="1">Porphyrin-containing compound metabolism; protoporphyrin-IX biosynthesis; 5-aminolevulinate from L-glutamyl-tRNA(Glu): step 1/2.</text>
</comment>
<comment type="subunit">
    <text evidence="1">Homodimer.</text>
</comment>
<comment type="domain">
    <text evidence="1">Possesses an unusual extended V-shaped dimeric structure with each monomer consisting of three distinct domains arranged along a curved 'spinal' alpha-helix. The N-terminal catalytic domain specifically recognizes the glutamate moiety of the substrate. The second domain is the NADPH-binding domain, and the third C-terminal domain is responsible for dimerization.</text>
</comment>
<comment type="miscellaneous">
    <text evidence="1">During catalysis, the active site Cys acts as a nucleophile attacking the alpha-carbonyl group of tRNA-bound glutamate with the formation of a thioester intermediate between enzyme and glutamate, and the concomitant release of tRNA(Glu). The thioester intermediate is finally reduced by direct hydride transfer from NADPH, to form the product GSA.</text>
</comment>
<comment type="similarity">
    <text evidence="1">Belongs to the glutamyl-tRNA reductase family.</text>
</comment>
<protein>
    <recommendedName>
        <fullName evidence="1">Glutamyl-tRNA reductase</fullName>
        <shortName evidence="1">GluTR</shortName>
        <ecNumber evidence="1">1.2.1.70</ecNumber>
    </recommendedName>
</protein>
<sequence length="418" mass="46358">MTLLALGINHKTAPVSLRERVSFSPDKLDQALDSLLAQPMVQGGVVLSTCNRTELYLSVEEQDNLQEALIRWLCDYHNLNEEDLRKSLYWHQDNDAVSHLMRVASGLDSLVLGEPQILGQVKKAFVDSQKGHMKASELERMFQKSFSVAKRVRTETDIGASAVSVAFAACTLARQIFESLSTVTVLLVGAGETIELVARHLREHKVQKMIIANRTRERAQILADEVGAEVIALSEIDERLREADIIISSTASPLPIIGKGMVERALKSRRNQPMLLVDIAVPRDVEPEVGKLANAYLYSVDDLQSIISHNLAQRKAAAVEAETIVAQETSEFMAWLRAQSASETIREYRSQAEHVRDELTAKALAALEQGGDAQAIMQDLAWKLTNRLIHAPTKSLQQAARDGDNERLNILRDSLGLE</sequence>